<protein>
    <recommendedName>
        <fullName evidence="1">Large ribosomal subunit protein bL9</fullName>
    </recommendedName>
    <alternativeName>
        <fullName evidence="2">50S ribosomal protein L9</fullName>
    </alternativeName>
</protein>
<name>RL9_RICAE</name>
<feature type="chain" id="PRO_1000206560" description="Large ribosomal subunit protein bL9">
    <location>
        <begin position="1"/>
        <end position="171"/>
    </location>
</feature>
<accession>C3PM74</accession>
<comment type="function">
    <text evidence="1">Binds to the 23S rRNA.</text>
</comment>
<comment type="similarity">
    <text evidence="1">Belongs to the bacterial ribosomal protein bL9 family.</text>
</comment>
<sequence>MEIILIKPVRKLGKIGDILKVADGFGRNYLLPQKLAIRATEPNKELIVKQKHEFEAKDKQIREEVEKINALIKDQQLVFIRQTSNDGKLFGSVTNKEVADKLSENISYNISHSNIILDKQIKSTGIYTVEIRLHAELNAIVTVIVARSESEAQDYLREQKTETSEDLAESA</sequence>
<organism>
    <name type="scientific">Rickettsia africae (strain ESF-5)</name>
    <dbReference type="NCBI Taxonomy" id="347255"/>
    <lineage>
        <taxon>Bacteria</taxon>
        <taxon>Pseudomonadati</taxon>
        <taxon>Pseudomonadota</taxon>
        <taxon>Alphaproteobacteria</taxon>
        <taxon>Rickettsiales</taxon>
        <taxon>Rickettsiaceae</taxon>
        <taxon>Rickettsieae</taxon>
        <taxon>Rickettsia</taxon>
        <taxon>spotted fever group</taxon>
    </lineage>
</organism>
<keyword id="KW-0687">Ribonucleoprotein</keyword>
<keyword id="KW-0689">Ribosomal protein</keyword>
<keyword id="KW-0694">RNA-binding</keyword>
<keyword id="KW-0699">rRNA-binding</keyword>
<dbReference type="EMBL" id="CP001612">
    <property type="protein sequence ID" value="ACP53034.1"/>
    <property type="molecule type" value="Genomic_DNA"/>
</dbReference>
<dbReference type="RefSeq" id="WP_012719335.1">
    <property type="nucleotide sequence ID" value="NC_012633.1"/>
</dbReference>
<dbReference type="SMR" id="C3PM74"/>
<dbReference type="KEGG" id="raf:RAF_ORF0059"/>
<dbReference type="HOGENOM" id="CLU_078938_3_0_5"/>
<dbReference type="Proteomes" id="UP000002305">
    <property type="component" value="Chromosome"/>
</dbReference>
<dbReference type="GO" id="GO:1990904">
    <property type="term" value="C:ribonucleoprotein complex"/>
    <property type="evidence" value="ECO:0007669"/>
    <property type="project" value="UniProtKB-KW"/>
</dbReference>
<dbReference type="GO" id="GO:0005840">
    <property type="term" value="C:ribosome"/>
    <property type="evidence" value="ECO:0007669"/>
    <property type="project" value="UniProtKB-KW"/>
</dbReference>
<dbReference type="GO" id="GO:0019843">
    <property type="term" value="F:rRNA binding"/>
    <property type="evidence" value="ECO:0007669"/>
    <property type="project" value="UniProtKB-UniRule"/>
</dbReference>
<dbReference type="GO" id="GO:0003735">
    <property type="term" value="F:structural constituent of ribosome"/>
    <property type="evidence" value="ECO:0007669"/>
    <property type="project" value="InterPro"/>
</dbReference>
<dbReference type="GO" id="GO:0006412">
    <property type="term" value="P:translation"/>
    <property type="evidence" value="ECO:0007669"/>
    <property type="project" value="UniProtKB-UniRule"/>
</dbReference>
<dbReference type="Gene3D" id="3.10.430.100">
    <property type="entry name" value="Ribosomal protein L9, C-terminal domain"/>
    <property type="match status" value="1"/>
</dbReference>
<dbReference type="Gene3D" id="3.40.5.10">
    <property type="entry name" value="Ribosomal protein L9, N-terminal domain"/>
    <property type="match status" value="1"/>
</dbReference>
<dbReference type="HAMAP" id="MF_00503">
    <property type="entry name" value="Ribosomal_bL9"/>
    <property type="match status" value="1"/>
</dbReference>
<dbReference type="InterPro" id="IPR000244">
    <property type="entry name" value="Ribosomal_bL9"/>
</dbReference>
<dbReference type="InterPro" id="IPR009027">
    <property type="entry name" value="Ribosomal_bL9/RNase_H1_N"/>
</dbReference>
<dbReference type="InterPro" id="IPR020594">
    <property type="entry name" value="Ribosomal_bL9_bac/chp"/>
</dbReference>
<dbReference type="InterPro" id="IPR020069">
    <property type="entry name" value="Ribosomal_bL9_C"/>
</dbReference>
<dbReference type="InterPro" id="IPR036791">
    <property type="entry name" value="Ribosomal_bL9_C_sf"/>
</dbReference>
<dbReference type="InterPro" id="IPR020070">
    <property type="entry name" value="Ribosomal_bL9_N"/>
</dbReference>
<dbReference type="InterPro" id="IPR036935">
    <property type="entry name" value="Ribosomal_bL9_N_sf"/>
</dbReference>
<dbReference type="NCBIfam" id="TIGR00158">
    <property type="entry name" value="L9"/>
    <property type="match status" value="1"/>
</dbReference>
<dbReference type="PANTHER" id="PTHR21368">
    <property type="entry name" value="50S RIBOSOMAL PROTEIN L9"/>
    <property type="match status" value="1"/>
</dbReference>
<dbReference type="Pfam" id="PF03948">
    <property type="entry name" value="Ribosomal_L9_C"/>
    <property type="match status" value="1"/>
</dbReference>
<dbReference type="Pfam" id="PF01281">
    <property type="entry name" value="Ribosomal_L9_N"/>
    <property type="match status" value="1"/>
</dbReference>
<dbReference type="SUPFAM" id="SSF55658">
    <property type="entry name" value="L9 N-domain-like"/>
    <property type="match status" value="1"/>
</dbReference>
<dbReference type="SUPFAM" id="SSF55653">
    <property type="entry name" value="Ribosomal protein L9 C-domain"/>
    <property type="match status" value="1"/>
</dbReference>
<dbReference type="PROSITE" id="PS00651">
    <property type="entry name" value="RIBOSOMAL_L9"/>
    <property type="match status" value="1"/>
</dbReference>
<gene>
    <name evidence="1" type="primary">rplI</name>
    <name type="ordered locus">RAF_ORF0059</name>
</gene>
<reference key="1">
    <citation type="journal article" date="2009" name="BMC Genomics">
        <title>Analysis of the Rickettsia africae genome reveals that virulence acquisition in Rickettsia species may be explained by genome reduction.</title>
        <authorList>
            <person name="Fournier P.-E."/>
            <person name="El Karkouri K."/>
            <person name="Leroy Q."/>
            <person name="Robert C."/>
            <person name="Giumelli B."/>
            <person name="Renesto P."/>
            <person name="Socolovschi C."/>
            <person name="Parola P."/>
            <person name="Audic S."/>
            <person name="Raoult D."/>
        </authorList>
    </citation>
    <scope>NUCLEOTIDE SEQUENCE [LARGE SCALE GENOMIC DNA]</scope>
    <source>
        <strain>ESF-5</strain>
    </source>
</reference>
<proteinExistence type="inferred from homology"/>
<evidence type="ECO:0000255" key="1">
    <source>
        <dbReference type="HAMAP-Rule" id="MF_00503"/>
    </source>
</evidence>
<evidence type="ECO:0000305" key="2"/>